<feature type="chain" id="PRO_0000252640" description="Glucose-6-phosphate isomerase 4">
    <location>
        <begin position="1"/>
        <end position="559"/>
    </location>
</feature>
<feature type="active site" description="Proton donor" evidence="1">
    <location>
        <position position="356"/>
    </location>
</feature>
<feature type="active site" evidence="1">
    <location>
        <position position="387"/>
    </location>
</feature>
<feature type="active site" evidence="1">
    <location>
        <position position="513"/>
    </location>
</feature>
<accession>Q0RUR2</accession>
<protein>
    <recommendedName>
        <fullName evidence="1">Glucose-6-phosphate isomerase 4</fullName>
        <shortName evidence="1">GPI 4</shortName>
        <ecNumber evidence="1">5.3.1.9</ecNumber>
    </recommendedName>
    <alternativeName>
        <fullName evidence="1">Phosphoglucose isomerase 4</fullName>
        <shortName evidence="1">PGI 4</shortName>
    </alternativeName>
    <alternativeName>
        <fullName evidence="1">Phosphohexose isomerase 4</fullName>
        <shortName evidence="1">PHI 4</shortName>
    </alternativeName>
</protein>
<gene>
    <name evidence="1" type="primary">pgi4</name>
    <name type="ordered locus">RHA1_ro11327</name>
</gene>
<dbReference type="EC" id="5.3.1.9" evidence="1"/>
<dbReference type="EMBL" id="CP000434">
    <property type="protein sequence ID" value="ABH00974.1"/>
    <property type="molecule type" value="Genomic_DNA"/>
</dbReference>
<dbReference type="RefSeq" id="WP_011600599.1">
    <property type="nucleotide sequence ID" value="NC_008271.1"/>
</dbReference>
<dbReference type="SMR" id="Q0RUR2"/>
<dbReference type="KEGG" id="rha:RHA1_ro11327"/>
<dbReference type="PATRIC" id="fig|101510.16.peg.9135"/>
<dbReference type="eggNOG" id="COG0166">
    <property type="taxonomic scope" value="Bacteria"/>
</dbReference>
<dbReference type="HOGENOM" id="CLU_017947_3_1_11"/>
<dbReference type="OrthoDB" id="140919at2"/>
<dbReference type="UniPathway" id="UPA00109">
    <property type="reaction ID" value="UER00181"/>
</dbReference>
<dbReference type="UniPathway" id="UPA00138"/>
<dbReference type="Proteomes" id="UP000008710">
    <property type="component" value="Plasmid pRHL3"/>
</dbReference>
<dbReference type="GO" id="GO:0005829">
    <property type="term" value="C:cytosol"/>
    <property type="evidence" value="ECO:0007669"/>
    <property type="project" value="TreeGrafter"/>
</dbReference>
<dbReference type="GO" id="GO:0097367">
    <property type="term" value="F:carbohydrate derivative binding"/>
    <property type="evidence" value="ECO:0007669"/>
    <property type="project" value="InterPro"/>
</dbReference>
<dbReference type="GO" id="GO:0004347">
    <property type="term" value="F:glucose-6-phosphate isomerase activity"/>
    <property type="evidence" value="ECO:0007669"/>
    <property type="project" value="UniProtKB-UniRule"/>
</dbReference>
<dbReference type="GO" id="GO:0048029">
    <property type="term" value="F:monosaccharide binding"/>
    <property type="evidence" value="ECO:0007669"/>
    <property type="project" value="TreeGrafter"/>
</dbReference>
<dbReference type="GO" id="GO:0006094">
    <property type="term" value="P:gluconeogenesis"/>
    <property type="evidence" value="ECO:0007669"/>
    <property type="project" value="UniProtKB-UniRule"/>
</dbReference>
<dbReference type="GO" id="GO:0051156">
    <property type="term" value="P:glucose 6-phosphate metabolic process"/>
    <property type="evidence" value="ECO:0007669"/>
    <property type="project" value="TreeGrafter"/>
</dbReference>
<dbReference type="GO" id="GO:0006096">
    <property type="term" value="P:glycolytic process"/>
    <property type="evidence" value="ECO:0007669"/>
    <property type="project" value="UniProtKB-UniRule"/>
</dbReference>
<dbReference type="CDD" id="cd05015">
    <property type="entry name" value="SIS_PGI_1"/>
    <property type="match status" value="1"/>
</dbReference>
<dbReference type="CDD" id="cd05016">
    <property type="entry name" value="SIS_PGI_2"/>
    <property type="match status" value="1"/>
</dbReference>
<dbReference type="FunFam" id="3.40.50.10490:FF:000018">
    <property type="entry name" value="Glucose-6-phosphate isomerase"/>
    <property type="match status" value="1"/>
</dbReference>
<dbReference type="Gene3D" id="1.10.1390.10">
    <property type="match status" value="1"/>
</dbReference>
<dbReference type="Gene3D" id="3.40.50.10490">
    <property type="entry name" value="Glucose-6-phosphate isomerase like protein, domain 1"/>
    <property type="match status" value="2"/>
</dbReference>
<dbReference type="HAMAP" id="MF_00473">
    <property type="entry name" value="G6P_isomerase"/>
    <property type="match status" value="1"/>
</dbReference>
<dbReference type="InterPro" id="IPR001672">
    <property type="entry name" value="G6P_Isomerase"/>
</dbReference>
<dbReference type="InterPro" id="IPR023096">
    <property type="entry name" value="G6P_Isomerase_C"/>
</dbReference>
<dbReference type="InterPro" id="IPR018189">
    <property type="entry name" value="Phosphoglucose_isomerase_CS"/>
</dbReference>
<dbReference type="InterPro" id="IPR046348">
    <property type="entry name" value="SIS_dom_sf"/>
</dbReference>
<dbReference type="InterPro" id="IPR035476">
    <property type="entry name" value="SIS_PGI_1"/>
</dbReference>
<dbReference type="InterPro" id="IPR035482">
    <property type="entry name" value="SIS_PGI_2"/>
</dbReference>
<dbReference type="NCBIfam" id="NF001211">
    <property type="entry name" value="PRK00179.1"/>
    <property type="match status" value="1"/>
</dbReference>
<dbReference type="PANTHER" id="PTHR11469">
    <property type="entry name" value="GLUCOSE-6-PHOSPHATE ISOMERASE"/>
    <property type="match status" value="1"/>
</dbReference>
<dbReference type="PANTHER" id="PTHR11469:SF1">
    <property type="entry name" value="GLUCOSE-6-PHOSPHATE ISOMERASE"/>
    <property type="match status" value="1"/>
</dbReference>
<dbReference type="Pfam" id="PF00342">
    <property type="entry name" value="PGI"/>
    <property type="match status" value="1"/>
</dbReference>
<dbReference type="PRINTS" id="PR00662">
    <property type="entry name" value="G6PISOMERASE"/>
</dbReference>
<dbReference type="SUPFAM" id="SSF53697">
    <property type="entry name" value="SIS domain"/>
    <property type="match status" value="1"/>
</dbReference>
<dbReference type="PROSITE" id="PS00765">
    <property type="entry name" value="P_GLUCOSE_ISOMERASE_1"/>
    <property type="match status" value="1"/>
</dbReference>
<dbReference type="PROSITE" id="PS00174">
    <property type="entry name" value="P_GLUCOSE_ISOMERASE_2"/>
    <property type="match status" value="1"/>
</dbReference>
<dbReference type="PROSITE" id="PS51463">
    <property type="entry name" value="P_GLUCOSE_ISOMERASE_3"/>
    <property type="match status" value="1"/>
</dbReference>
<keyword id="KW-0963">Cytoplasm</keyword>
<keyword id="KW-0312">Gluconeogenesis</keyword>
<keyword id="KW-0324">Glycolysis</keyword>
<keyword id="KW-0413">Isomerase</keyword>
<keyword id="KW-0614">Plasmid</keyword>
<sequence>MTAQHSDITATSAWQKLHAHRDETSALTIRELFAADTERGRELTLTAGELYIDYSKQRVSRHTLALLVELARAAGVEERRDAMFRGERINTSEDRAVLHTALRLPAHASLRVDGHDVVADVHRVLARMGVFSDRLRSGEWRGATGRPIMTVVNIGIGGSDLGPHMVYRALRHYADSGISVRFISNVDPSDLVATLADLDPSTTLFIVASKTFSTLETLTNAANARRWVTSALGEQAVARHFVAVSTNAERVAAFGIDTENMFGFWDWVGGRYSVGSAVGLAVMVAIGKDSFEEFLDGFHTIDRHFADTPLEDNAPAILALLGVWYSNFFGAETRAILPYSNDLGRFPAYLQQLAMESNGKSVRADGSPIGTTTGAVFWGEPGSNGQHAFYQLLHQGTRLVPADFIGFAEPTHDLPAADGAGSMHNILMSNLFAQSRVLAFGKTPEELTREDTAPDLIAHKTMPGNQPSTTILAPRLTPSVLGQLIALYEHQVFVEGIIYGIGSFDQWGVELGKTQALELEPALSSGNGSLPSDLDSSTASMIRWYHGVRAHGTATVGRP</sequence>
<geneLocation type="plasmid">
    <name>pRHL3</name>
</geneLocation>
<comment type="function">
    <text evidence="1">Catalyzes the reversible isomerization of glucose-6-phosphate to fructose-6-phosphate.</text>
</comment>
<comment type="catalytic activity">
    <reaction evidence="1">
        <text>alpha-D-glucose 6-phosphate = beta-D-fructose 6-phosphate</text>
        <dbReference type="Rhea" id="RHEA:11816"/>
        <dbReference type="ChEBI" id="CHEBI:57634"/>
        <dbReference type="ChEBI" id="CHEBI:58225"/>
        <dbReference type="EC" id="5.3.1.9"/>
    </reaction>
</comment>
<comment type="pathway">
    <text evidence="1">Carbohydrate biosynthesis; gluconeogenesis.</text>
</comment>
<comment type="pathway">
    <text evidence="1">Carbohydrate degradation; glycolysis; D-glyceraldehyde 3-phosphate and glycerone phosphate from D-glucose: step 2/4.</text>
</comment>
<comment type="subcellular location">
    <subcellularLocation>
        <location evidence="1">Cytoplasm</location>
    </subcellularLocation>
</comment>
<comment type="similarity">
    <text evidence="1">Belongs to the GPI family.</text>
</comment>
<evidence type="ECO:0000255" key="1">
    <source>
        <dbReference type="HAMAP-Rule" id="MF_00473"/>
    </source>
</evidence>
<organism>
    <name type="scientific">Rhodococcus jostii (strain RHA1)</name>
    <dbReference type="NCBI Taxonomy" id="101510"/>
    <lineage>
        <taxon>Bacteria</taxon>
        <taxon>Bacillati</taxon>
        <taxon>Actinomycetota</taxon>
        <taxon>Actinomycetes</taxon>
        <taxon>Mycobacteriales</taxon>
        <taxon>Nocardiaceae</taxon>
        <taxon>Rhodococcus</taxon>
    </lineage>
</organism>
<reference key="1">
    <citation type="journal article" date="2006" name="Proc. Natl. Acad. Sci. U.S.A.">
        <title>The complete genome of Rhodococcus sp. RHA1 provides insights into a catabolic powerhouse.</title>
        <authorList>
            <person name="McLeod M.P."/>
            <person name="Warren R.L."/>
            <person name="Hsiao W.W.L."/>
            <person name="Araki N."/>
            <person name="Myhre M."/>
            <person name="Fernandes C."/>
            <person name="Miyazawa D."/>
            <person name="Wong W."/>
            <person name="Lillquist A.L."/>
            <person name="Wang D."/>
            <person name="Dosanjh M."/>
            <person name="Hara H."/>
            <person name="Petrescu A."/>
            <person name="Morin R.D."/>
            <person name="Yang G."/>
            <person name="Stott J.M."/>
            <person name="Schein J.E."/>
            <person name="Shin H."/>
            <person name="Smailus D."/>
            <person name="Siddiqui A.S."/>
            <person name="Marra M.A."/>
            <person name="Jones S.J.M."/>
            <person name="Holt R."/>
            <person name="Brinkman F.S.L."/>
            <person name="Miyauchi K."/>
            <person name="Fukuda M."/>
            <person name="Davies J.E."/>
            <person name="Mohn W.W."/>
            <person name="Eltis L.D."/>
        </authorList>
    </citation>
    <scope>NUCLEOTIDE SEQUENCE [LARGE SCALE GENOMIC DNA]</scope>
    <source>
        <strain>RHA1</strain>
    </source>
</reference>
<proteinExistence type="inferred from homology"/>
<name>G6PI4_RHOJR</name>